<organism>
    <name type="scientific">Prochlorococcus marinus (strain MIT 9313)</name>
    <dbReference type="NCBI Taxonomy" id="74547"/>
    <lineage>
        <taxon>Bacteria</taxon>
        <taxon>Bacillati</taxon>
        <taxon>Cyanobacteriota</taxon>
        <taxon>Cyanophyceae</taxon>
        <taxon>Synechococcales</taxon>
        <taxon>Prochlorococcaceae</taxon>
        <taxon>Prochlorococcus</taxon>
    </lineage>
</organism>
<protein>
    <recommendedName>
        <fullName evidence="1">Dihydroorotate dehydrogenase (quinone)</fullName>
        <ecNumber evidence="1">1.3.5.2</ecNumber>
    </recommendedName>
    <alternativeName>
        <fullName evidence="1">DHOdehase</fullName>
        <shortName evidence="1">DHOD</shortName>
        <shortName evidence="1">DHODase</shortName>
    </alternativeName>
    <alternativeName>
        <fullName evidence="1">Dihydroorotate oxidase</fullName>
    </alternativeName>
</protein>
<reference key="1">
    <citation type="journal article" date="2003" name="Nature">
        <title>Genome divergence in two Prochlorococcus ecotypes reflects oceanic niche differentiation.</title>
        <authorList>
            <person name="Rocap G."/>
            <person name="Larimer F.W."/>
            <person name="Lamerdin J.E."/>
            <person name="Malfatti S."/>
            <person name="Chain P."/>
            <person name="Ahlgren N.A."/>
            <person name="Arellano A."/>
            <person name="Coleman M."/>
            <person name="Hauser L."/>
            <person name="Hess W.R."/>
            <person name="Johnson Z.I."/>
            <person name="Land M.L."/>
            <person name="Lindell D."/>
            <person name="Post A.F."/>
            <person name="Regala W."/>
            <person name="Shah M."/>
            <person name="Shaw S.L."/>
            <person name="Steglich C."/>
            <person name="Sullivan M.B."/>
            <person name="Ting C.S."/>
            <person name="Tolonen A."/>
            <person name="Webb E.A."/>
            <person name="Zinser E.R."/>
            <person name="Chisholm S.W."/>
        </authorList>
    </citation>
    <scope>NUCLEOTIDE SEQUENCE [LARGE SCALE GENOMIC DNA]</scope>
    <source>
        <strain>MIT 9313</strain>
    </source>
</reference>
<accession>Q7V473</accession>
<proteinExistence type="inferred from homology"/>
<name>PYRD_PROMM</name>
<keyword id="KW-1003">Cell membrane</keyword>
<keyword id="KW-0285">Flavoprotein</keyword>
<keyword id="KW-0288">FMN</keyword>
<keyword id="KW-0472">Membrane</keyword>
<keyword id="KW-0560">Oxidoreductase</keyword>
<keyword id="KW-0665">Pyrimidine biosynthesis</keyword>
<keyword id="KW-1185">Reference proteome</keyword>
<feature type="chain" id="PRO_0000148466" description="Dihydroorotate dehydrogenase (quinone)">
    <location>
        <begin position="1"/>
        <end position="392"/>
    </location>
</feature>
<feature type="active site" description="Nucleophile" evidence="1">
    <location>
        <position position="209"/>
    </location>
</feature>
<feature type="binding site" evidence="1">
    <location>
        <begin position="90"/>
        <end position="94"/>
    </location>
    <ligand>
        <name>FMN</name>
        <dbReference type="ChEBI" id="CHEBI:58210"/>
    </ligand>
</feature>
<feature type="binding site" evidence="1">
    <location>
        <position position="94"/>
    </location>
    <ligand>
        <name>substrate</name>
    </ligand>
</feature>
<feature type="binding site" evidence="1">
    <location>
        <position position="114"/>
    </location>
    <ligand>
        <name>FMN</name>
        <dbReference type="ChEBI" id="CHEBI:58210"/>
    </ligand>
</feature>
<feature type="binding site" evidence="1">
    <location>
        <begin position="139"/>
        <end position="143"/>
    </location>
    <ligand>
        <name>substrate</name>
    </ligand>
</feature>
<feature type="binding site" evidence="1">
    <location>
        <position position="173"/>
    </location>
    <ligand>
        <name>FMN</name>
        <dbReference type="ChEBI" id="CHEBI:58210"/>
    </ligand>
</feature>
<feature type="binding site" evidence="1">
    <location>
        <position position="206"/>
    </location>
    <ligand>
        <name>FMN</name>
        <dbReference type="ChEBI" id="CHEBI:58210"/>
    </ligand>
</feature>
<feature type="binding site" evidence="1">
    <location>
        <position position="206"/>
    </location>
    <ligand>
        <name>substrate</name>
    </ligand>
</feature>
<feature type="binding site" evidence="1">
    <location>
        <position position="211"/>
    </location>
    <ligand>
        <name>substrate</name>
    </ligand>
</feature>
<feature type="binding site" evidence="1">
    <location>
        <position position="243"/>
    </location>
    <ligand>
        <name>FMN</name>
        <dbReference type="ChEBI" id="CHEBI:58210"/>
    </ligand>
</feature>
<feature type="binding site" evidence="1">
    <location>
        <position position="271"/>
    </location>
    <ligand>
        <name>FMN</name>
        <dbReference type="ChEBI" id="CHEBI:58210"/>
    </ligand>
</feature>
<feature type="binding site" evidence="1">
    <location>
        <begin position="272"/>
        <end position="273"/>
    </location>
    <ligand>
        <name>substrate</name>
    </ligand>
</feature>
<feature type="binding site" evidence="1">
    <location>
        <position position="301"/>
    </location>
    <ligand>
        <name>FMN</name>
        <dbReference type="ChEBI" id="CHEBI:58210"/>
    </ligand>
</feature>
<feature type="binding site" evidence="1">
    <location>
        <position position="330"/>
    </location>
    <ligand>
        <name>FMN</name>
        <dbReference type="ChEBI" id="CHEBI:58210"/>
    </ligand>
</feature>
<feature type="binding site" evidence="1">
    <location>
        <begin position="351"/>
        <end position="352"/>
    </location>
    <ligand>
        <name>FMN</name>
        <dbReference type="ChEBI" id="CHEBI:58210"/>
    </ligand>
</feature>
<dbReference type="EC" id="1.3.5.2" evidence="1"/>
<dbReference type="EMBL" id="BX548175">
    <property type="protein sequence ID" value="CAE22268.1"/>
    <property type="molecule type" value="Genomic_DNA"/>
</dbReference>
<dbReference type="RefSeq" id="WP_011131458.1">
    <property type="nucleotide sequence ID" value="NC_005071.1"/>
</dbReference>
<dbReference type="SMR" id="Q7V473"/>
<dbReference type="KEGG" id="pmt:PMT_2094"/>
<dbReference type="eggNOG" id="COG0167">
    <property type="taxonomic scope" value="Bacteria"/>
</dbReference>
<dbReference type="HOGENOM" id="CLU_013640_2_0_3"/>
<dbReference type="OrthoDB" id="9802377at2"/>
<dbReference type="UniPathway" id="UPA00070">
    <property type="reaction ID" value="UER00946"/>
</dbReference>
<dbReference type="Proteomes" id="UP000001423">
    <property type="component" value="Chromosome"/>
</dbReference>
<dbReference type="GO" id="GO:0005737">
    <property type="term" value="C:cytoplasm"/>
    <property type="evidence" value="ECO:0007669"/>
    <property type="project" value="InterPro"/>
</dbReference>
<dbReference type="GO" id="GO:0005886">
    <property type="term" value="C:plasma membrane"/>
    <property type="evidence" value="ECO:0007669"/>
    <property type="project" value="UniProtKB-SubCell"/>
</dbReference>
<dbReference type="GO" id="GO:0106430">
    <property type="term" value="F:dihydroorotate dehydrogenase (quinone) activity"/>
    <property type="evidence" value="ECO:0007669"/>
    <property type="project" value="UniProtKB-EC"/>
</dbReference>
<dbReference type="GO" id="GO:0006207">
    <property type="term" value="P:'de novo' pyrimidine nucleobase biosynthetic process"/>
    <property type="evidence" value="ECO:0007669"/>
    <property type="project" value="InterPro"/>
</dbReference>
<dbReference type="GO" id="GO:0044205">
    <property type="term" value="P:'de novo' UMP biosynthetic process"/>
    <property type="evidence" value="ECO:0007669"/>
    <property type="project" value="UniProtKB-UniRule"/>
</dbReference>
<dbReference type="CDD" id="cd04738">
    <property type="entry name" value="DHOD_2_like"/>
    <property type="match status" value="1"/>
</dbReference>
<dbReference type="Gene3D" id="3.20.20.70">
    <property type="entry name" value="Aldolase class I"/>
    <property type="match status" value="1"/>
</dbReference>
<dbReference type="HAMAP" id="MF_00225">
    <property type="entry name" value="DHO_dh_type2"/>
    <property type="match status" value="1"/>
</dbReference>
<dbReference type="InterPro" id="IPR013785">
    <property type="entry name" value="Aldolase_TIM"/>
</dbReference>
<dbReference type="InterPro" id="IPR050074">
    <property type="entry name" value="DHO_dehydrogenase"/>
</dbReference>
<dbReference type="InterPro" id="IPR005719">
    <property type="entry name" value="Dihydroorotate_DH_2"/>
</dbReference>
<dbReference type="InterPro" id="IPR005720">
    <property type="entry name" value="Dihydroorotate_DH_cat"/>
</dbReference>
<dbReference type="InterPro" id="IPR001295">
    <property type="entry name" value="Dihydroorotate_DH_CS"/>
</dbReference>
<dbReference type="NCBIfam" id="NF003650">
    <property type="entry name" value="PRK05286.2-3"/>
    <property type="match status" value="1"/>
</dbReference>
<dbReference type="NCBIfam" id="NF003652">
    <property type="entry name" value="PRK05286.2-5"/>
    <property type="match status" value="1"/>
</dbReference>
<dbReference type="NCBIfam" id="TIGR01036">
    <property type="entry name" value="pyrD_sub2"/>
    <property type="match status" value="1"/>
</dbReference>
<dbReference type="PANTHER" id="PTHR48109:SF4">
    <property type="entry name" value="DIHYDROOROTATE DEHYDROGENASE (QUINONE), MITOCHONDRIAL"/>
    <property type="match status" value="1"/>
</dbReference>
<dbReference type="PANTHER" id="PTHR48109">
    <property type="entry name" value="DIHYDROOROTATE DEHYDROGENASE (QUINONE), MITOCHONDRIAL-RELATED"/>
    <property type="match status" value="1"/>
</dbReference>
<dbReference type="Pfam" id="PF01180">
    <property type="entry name" value="DHO_dh"/>
    <property type="match status" value="1"/>
</dbReference>
<dbReference type="SUPFAM" id="SSF51395">
    <property type="entry name" value="FMN-linked oxidoreductases"/>
    <property type="match status" value="1"/>
</dbReference>
<dbReference type="PROSITE" id="PS00911">
    <property type="entry name" value="DHODEHASE_1"/>
    <property type="match status" value="1"/>
</dbReference>
<dbReference type="PROSITE" id="PS00912">
    <property type="entry name" value="DHODEHASE_2"/>
    <property type="match status" value="1"/>
</dbReference>
<gene>
    <name evidence="1" type="primary">pyrD</name>
    <name type="ordered locus">PMT_2094</name>
</gene>
<evidence type="ECO:0000255" key="1">
    <source>
        <dbReference type="HAMAP-Rule" id="MF_00225"/>
    </source>
</evidence>
<comment type="function">
    <text evidence="1">Catalyzes the conversion of dihydroorotate to orotate with quinone as electron acceptor.</text>
</comment>
<comment type="catalytic activity">
    <reaction evidence="1">
        <text>(S)-dihydroorotate + a quinone = orotate + a quinol</text>
        <dbReference type="Rhea" id="RHEA:30187"/>
        <dbReference type="ChEBI" id="CHEBI:24646"/>
        <dbReference type="ChEBI" id="CHEBI:30839"/>
        <dbReference type="ChEBI" id="CHEBI:30864"/>
        <dbReference type="ChEBI" id="CHEBI:132124"/>
        <dbReference type="EC" id="1.3.5.2"/>
    </reaction>
</comment>
<comment type="cofactor">
    <cofactor evidence="1">
        <name>FMN</name>
        <dbReference type="ChEBI" id="CHEBI:58210"/>
    </cofactor>
    <text evidence="1">Binds 1 FMN per subunit.</text>
</comment>
<comment type="pathway">
    <text evidence="1">Pyrimidine metabolism; UMP biosynthesis via de novo pathway; orotate from (S)-dihydroorotate (quinone route): step 1/1.</text>
</comment>
<comment type="subunit">
    <text evidence="1">Monomer.</text>
</comment>
<comment type="subcellular location">
    <subcellularLocation>
        <location evidence="1">Cell membrane</location>
        <topology evidence="1">Peripheral membrane protein</topology>
    </subcellularLocation>
</comment>
<comment type="similarity">
    <text evidence="1">Belongs to the dihydroorotate dehydrogenase family. Type 2 subfamily.</text>
</comment>
<sequence>MAEPSPAKVYSTGGLYRRWLGAILANDQGLDPEQLTQAALSALSQTSLRRDWPGVSAVLAAIALDLQRHDLRLEQVLFGCRFLNPVGLAAGFDKNGVAASIWDRFGFGFAELGTVTWHGQTGNPRPRLFRLAAEQAALNRMGFNNNGAEVMRRTLEKQALPSPGQRPAVLGLNLGKSRITPLEQAPDDYALSLELLAPLADYAVINVSSPNTPGLRDLQDASQLRRLVERLRRLPGCPPLLVKIAPDLEDDAIDGLARLAYEEGLAGVIAVNTSLDRFGLDGRVLPKTGRTLAEEAGGLSGAPLRQRALEVLRRLRATAGPALPLIGVGGIDSPEAAWERISAGASLVQLYTGWIFKGPDLVPNILDGLIGQLDRHGFRHVSEAVGSGVPWQ</sequence>